<comment type="similarity">
    <text evidence="1">Belongs to the UPF0223 family.</text>
</comment>
<keyword id="KW-1185">Reference proteome</keyword>
<gene>
    <name type="ordered locus">SGO_1052</name>
</gene>
<sequence length="92" mass="10292">MNKNYSYPLDLSWSTEELASVLSFLNDVEKAYESKVSAQQLLGSYAVFKEVVPSKAEEKRIGREFESVSGYSLYRAVQAAKNTEKGMISLGK</sequence>
<proteinExistence type="inferred from homology"/>
<accession>A8AX31</accession>
<protein>
    <recommendedName>
        <fullName evidence="1">UPF0223 protein SGO_1052</fullName>
    </recommendedName>
</protein>
<organism>
    <name type="scientific">Streptococcus gordonii (strain Challis / ATCC 35105 / BCRC 15272 / CH1 / DL1 / V288)</name>
    <dbReference type="NCBI Taxonomy" id="467705"/>
    <lineage>
        <taxon>Bacteria</taxon>
        <taxon>Bacillati</taxon>
        <taxon>Bacillota</taxon>
        <taxon>Bacilli</taxon>
        <taxon>Lactobacillales</taxon>
        <taxon>Streptococcaceae</taxon>
        <taxon>Streptococcus</taxon>
    </lineage>
</organism>
<name>Y1052_STRGC</name>
<reference key="1">
    <citation type="journal article" date="2007" name="J. Bacteriol.">
        <title>Genome-wide transcriptional changes in Streptococcus gordonii in response to competence signaling peptide.</title>
        <authorList>
            <person name="Vickerman M.M."/>
            <person name="Iobst S."/>
            <person name="Jesionowski A.M."/>
            <person name="Gill S.R."/>
        </authorList>
    </citation>
    <scope>NUCLEOTIDE SEQUENCE [LARGE SCALE GENOMIC DNA]</scope>
    <source>
        <strain>Challis / ATCC 35105 / BCRC 15272 / CH1 / DL1 / V288</strain>
    </source>
</reference>
<feature type="chain" id="PRO_1000084343" description="UPF0223 protein SGO_1052">
    <location>
        <begin position="1"/>
        <end position="92"/>
    </location>
</feature>
<dbReference type="EMBL" id="CP000725">
    <property type="protein sequence ID" value="ABV10697.1"/>
    <property type="molecule type" value="Genomic_DNA"/>
</dbReference>
<dbReference type="RefSeq" id="WP_012000465.1">
    <property type="nucleotide sequence ID" value="NC_009785.1"/>
</dbReference>
<dbReference type="SMR" id="A8AX31"/>
<dbReference type="STRING" id="467705.SGO_1052"/>
<dbReference type="KEGG" id="sgo:SGO_1052"/>
<dbReference type="eggNOG" id="COG4476">
    <property type="taxonomic scope" value="Bacteria"/>
</dbReference>
<dbReference type="HOGENOM" id="CLU_166693_0_0_9"/>
<dbReference type="Proteomes" id="UP000001131">
    <property type="component" value="Chromosome"/>
</dbReference>
<dbReference type="Gene3D" id="1.10.220.80">
    <property type="entry name" value="BH2638-like"/>
    <property type="match status" value="1"/>
</dbReference>
<dbReference type="HAMAP" id="MF_01041">
    <property type="entry name" value="UPF0223"/>
    <property type="match status" value="1"/>
</dbReference>
<dbReference type="InterPro" id="IPR023324">
    <property type="entry name" value="BH2638-like_sf"/>
</dbReference>
<dbReference type="InterPro" id="IPR007920">
    <property type="entry name" value="UPF0223"/>
</dbReference>
<dbReference type="NCBIfam" id="NF003353">
    <property type="entry name" value="PRK04387.1"/>
    <property type="match status" value="1"/>
</dbReference>
<dbReference type="Pfam" id="PF05256">
    <property type="entry name" value="UPF0223"/>
    <property type="match status" value="1"/>
</dbReference>
<dbReference type="PIRSF" id="PIRSF037260">
    <property type="entry name" value="UPF0223"/>
    <property type="match status" value="1"/>
</dbReference>
<dbReference type="SUPFAM" id="SSF158504">
    <property type="entry name" value="BH2638-like"/>
    <property type="match status" value="1"/>
</dbReference>
<evidence type="ECO:0000255" key="1">
    <source>
        <dbReference type="HAMAP-Rule" id="MF_01041"/>
    </source>
</evidence>